<protein>
    <recommendedName>
        <fullName evidence="1">Large ribosomal subunit protein bL21</fullName>
    </recommendedName>
    <alternativeName>
        <fullName evidence="2">50S ribosomal protein L21</fullName>
    </alternativeName>
</protein>
<organism>
    <name type="scientific">Yersinia pestis bv. Antiqua (strain Nepal516)</name>
    <dbReference type="NCBI Taxonomy" id="377628"/>
    <lineage>
        <taxon>Bacteria</taxon>
        <taxon>Pseudomonadati</taxon>
        <taxon>Pseudomonadota</taxon>
        <taxon>Gammaproteobacteria</taxon>
        <taxon>Enterobacterales</taxon>
        <taxon>Yersiniaceae</taxon>
        <taxon>Yersinia</taxon>
    </lineage>
</organism>
<keyword id="KW-0687">Ribonucleoprotein</keyword>
<keyword id="KW-0689">Ribosomal protein</keyword>
<keyword id="KW-0694">RNA-binding</keyword>
<keyword id="KW-0699">rRNA-binding</keyword>
<comment type="function">
    <text evidence="1">This protein binds to 23S rRNA in the presence of protein L20.</text>
</comment>
<comment type="subunit">
    <text evidence="1">Part of the 50S ribosomal subunit. Contacts protein L20.</text>
</comment>
<comment type="similarity">
    <text evidence="1">Belongs to the bacterial ribosomal protein bL21 family.</text>
</comment>
<sequence>MYAVFQSGGKQHRVSEGQTIRLEKLDIATGETIEFDQVLMIANGEEINIGAPLVDGGKIKAEIIAHGRGEKIKIVKFRRRKHYRKQQGHRQWFTDVKITGISA</sequence>
<proteinExistence type="inferred from homology"/>
<name>RL21_YERPN</name>
<dbReference type="EMBL" id="CP000305">
    <property type="protein sequence ID" value="ABG19583.1"/>
    <property type="molecule type" value="Genomic_DNA"/>
</dbReference>
<dbReference type="EMBL" id="ACNQ01000017">
    <property type="protein sequence ID" value="EEO75764.1"/>
    <property type="molecule type" value="Genomic_DNA"/>
</dbReference>
<dbReference type="RefSeq" id="WP_002210178.1">
    <property type="nucleotide sequence ID" value="NZ_ACNQ01000017.1"/>
</dbReference>
<dbReference type="SMR" id="Q1CEJ7"/>
<dbReference type="GeneID" id="57975202"/>
<dbReference type="KEGG" id="ypn:YPN_3256"/>
<dbReference type="HOGENOM" id="CLU_061463_3_3_6"/>
<dbReference type="Proteomes" id="UP000008936">
    <property type="component" value="Chromosome"/>
</dbReference>
<dbReference type="GO" id="GO:0005737">
    <property type="term" value="C:cytoplasm"/>
    <property type="evidence" value="ECO:0007669"/>
    <property type="project" value="UniProtKB-ARBA"/>
</dbReference>
<dbReference type="GO" id="GO:1990904">
    <property type="term" value="C:ribonucleoprotein complex"/>
    <property type="evidence" value="ECO:0007669"/>
    <property type="project" value="UniProtKB-KW"/>
</dbReference>
<dbReference type="GO" id="GO:0005840">
    <property type="term" value="C:ribosome"/>
    <property type="evidence" value="ECO:0007669"/>
    <property type="project" value="UniProtKB-KW"/>
</dbReference>
<dbReference type="GO" id="GO:0019843">
    <property type="term" value="F:rRNA binding"/>
    <property type="evidence" value="ECO:0007669"/>
    <property type="project" value="UniProtKB-UniRule"/>
</dbReference>
<dbReference type="GO" id="GO:0003735">
    <property type="term" value="F:structural constituent of ribosome"/>
    <property type="evidence" value="ECO:0007669"/>
    <property type="project" value="InterPro"/>
</dbReference>
<dbReference type="GO" id="GO:0006412">
    <property type="term" value="P:translation"/>
    <property type="evidence" value="ECO:0007669"/>
    <property type="project" value="UniProtKB-UniRule"/>
</dbReference>
<dbReference type="HAMAP" id="MF_01363">
    <property type="entry name" value="Ribosomal_bL21"/>
    <property type="match status" value="1"/>
</dbReference>
<dbReference type="InterPro" id="IPR028909">
    <property type="entry name" value="bL21-like"/>
</dbReference>
<dbReference type="InterPro" id="IPR036164">
    <property type="entry name" value="bL21-like_sf"/>
</dbReference>
<dbReference type="InterPro" id="IPR001787">
    <property type="entry name" value="Ribosomal_bL21"/>
</dbReference>
<dbReference type="InterPro" id="IPR018258">
    <property type="entry name" value="Ribosomal_bL21_CS"/>
</dbReference>
<dbReference type="NCBIfam" id="TIGR00061">
    <property type="entry name" value="L21"/>
    <property type="match status" value="1"/>
</dbReference>
<dbReference type="PANTHER" id="PTHR21349">
    <property type="entry name" value="50S RIBOSOMAL PROTEIN L21"/>
    <property type="match status" value="1"/>
</dbReference>
<dbReference type="PANTHER" id="PTHR21349:SF0">
    <property type="entry name" value="LARGE RIBOSOMAL SUBUNIT PROTEIN BL21M"/>
    <property type="match status" value="1"/>
</dbReference>
<dbReference type="Pfam" id="PF00829">
    <property type="entry name" value="Ribosomal_L21p"/>
    <property type="match status" value="1"/>
</dbReference>
<dbReference type="SUPFAM" id="SSF141091">
    <property type="entry name" value="L21p-like"/>
    <property type="match status" value="1"/>
</dbReference>
<dbReference type="PROSITE" id="PS01169">
    <property type="entry name" value="RIBOSOMAL_L21"/>
    <property type="match status" value="1"/>
</dbReference>
<reference key="1">
    <citation type="journal article" date="2006" name="J. Bacteriol.">
        <title>Complete genome sequence of Yersinia pestis strains Antiqua and Nepal516: evidence of gene reduction in an emerging pathogen.</title>
        <authorList>
            <person name="Chain P.S.G."/>
            <person name="Hu P."/>
            <person name="Malfatti S.A."/>
            <person name="Radnedge L."/>
            <person name="Larimer F."/>
            <person name="Vergez L.M."/>
            <person name="Worsham P."/>
            <person name="Chu M.C."/>
            <person name="Andersen G.L."/>
        </authorList>
    </citation>
    <scope>NUCLEOTIDE SEQUENCE [LARGE SCALE GENOMIC DNA]</scope>
    <source>
        <strain>Nepal516</strain>
    </source>
</reference>
<reference key="2">
    <citation type="submission" date="2009-04" db="EMBL/GenBank/DDBJ databases">
        <title>Yersinia pestis Nepal516A whole genome shotgun sequencing project.</title>
        <authorList>
            <person name="Plunkett G. III"/>
            <person name="Anderson B.D."/>
            <person name="Baumler D.J."/>
            <person name="Burland V."/>
            <person name="Cabot E.L."/>
            <person name="Glasner J.D."/>
            <person name="Mau B."/>
            <person name="Neeno-Eckwall E."/>
            <person name="Perna N.T."/>
            <person name="Munk A.C."/>
            <person name="Tapia R."/>
            <person name="Green L.D."/>
            <person name="Rogers Y.C."/>
            <person name="Detter J.C."/>
            <person name="Bruce D.C."/>
            <person name="Brettin T.S."/>
        </authorList>
    </citation>
    <scope>NUCLEOTIDE SEQUENCE [LARGE SCALE GENOMIC DNA]</scope>
    <source>
        <strain>Nepal516</strain>
    </source>
</reference>
<accession>Q1CEJ7</accession>
<accession>C4GXW4</accession>
<evidence type="ECO:0000255" key="1">
    <source>
        <dbReference type="HAMAP-Rule" id="MF_01363"/>
    </source>
</evidence>
<evidence type="ECO:0000305" key="2"/>
<feature type="chain" id="PRO_0000269437" description="Large ribosomal subunit protein bL21">
    <location>
        <begin position="1"/>
        <end position="103"/>
    </location>
</feature>
<gene>
    <name evidence="1" type="primary">rplU</name>
    <name type="ordered locus">YPN_3256</name>
    <name type="ORF">YP516_3699</name>
</gene>